<evidence type="ECO:0000250" key="1">
    <source>
        <dbReference type="UniProtKB" id="P30115"/>
    </source>
</evidence>
<evidence type="ECO:0000269" key="2">
    <source>
    </source>
</evidence>
<evidence type="ECO:0000269" key="3">
    <source>
    </source>
</evidence>
<evidence type="ECO:0000269" key="4">
    <source>
    </source>
</evidence>
<evidence type="ECO:0000269" key="5">
    <source>
    </source>
</evidence>
<evidence type="ECO:0000269" key="6">
    <source ref="3"/>
</evidence>
<evidence type="ECO:0000305" key="7"/>
<evidence type="ECO:0000305" key="8">
    <source>
    </source>
</evidence>
<evidence type="ECO:0000312" key="9">
    <source>
        <dbReference type="HGNC" id="HGNC:4628"/>
    </source>
</evidence>
<evidence type="ECO:0007829" key="10">
    <source>
        <dbReference type="PDB" id="2VCV"/>
    </source>
</evidence>
<proteinExistence type="evidence at protein level"/>
<organism>
    <name type="scientific">Homo sapiens</name>
    <name type="common">Human</name>
    <dbReference type="NCBI Taxonomy" id="9606"/>
    <lineage>
        <taxon>Eukaryota</taxon>
        <taxon>Metazoa</taxon>
        <taxon>Chordata</taxon>
        <taxon>Craniata</taxon>
        <taxon>Vertebrata</taxon>
        <taxon>Euteleostomi</taxon>
        <taxon>Mammalia</taxon>
        <taxon>Eutheria</taxon>
        <taxon>Euarchontoglires</taxon>
        <taxon>Primates</taxon>
        <taxon>Haplorrhini</taxon>
        <taxon>Catarrhini</taxon>
        <taxon>Hominidae</taxon>
        <taxon>Homo</taxon>
    </lineage>
</organism>
<feature type="initiator methionine" description="Removed" evidence="1">
    <location>
        <position position="1"/>
    </location>
</feature>
<feature type="chain" id="PRO_0000185785" description="Glutathione S-transferase A3">
    <location>
        <begin position="2"/>
        <end position="222"/>
    </location>
</feature>
<feature type="domain" description="GST N-terminal">
    <location>
        <begin position="3"/>
        <end position="83"/>
    </location>
</feature>
<feature type="domain" description="GST C-terminal">
    <location>
        <begin position="85"/>
        <end position="207"/>
    </location>
</feature>
<feature type="binding site" evidence="3 4">
    <location>
        <position position="9"/>
    </location>
    <ligand>
        <name>glutathione</name>
        <dbReference type="ChEBI" id="CHEBI:57925"/>
    </ligand>
</feature>
<feature type="binding site" evidence="3 4">
    <location>
        <position position="45"/>
    </location>
    <ligand>
        <name>glutathione</name>
        <dbReference type="ChEBI" id="CHEBI:57925"/>
    </ligand>
</feature>
<feature type="binding site" evidence="3 4">
    <location>
        <begin position="54"/>
        <end position="55"/>
    </location>
    <ligand>
        <name>glutathione</name>
        <dbReference type="ChEBI" id="CHEBI:57925"/>
    </ligand>
</feature>
<feature type="binding site" evidence="3 4">
    <location>
        <begin position="67"/>
        <end position="68"/>
    </location>
    <ligand>
        <name>glutathione</name>
        <dbReference type="ChEBI" id="CHEBI:57925"/>
    </ligand>
</feature>
<feature type="modified residue" description="N-acetylalanine" evidence="1">
    <location>
        <position position="2"/>
    </location>
</feature>
<feature type="modified residue" description="N6-succinyllysine" evidence="1">
    <location>
        <position position="4"/>
    </location>
</feature>
<feature type="sequence variant" id="VAR_062276" description="In dbSNP:rs45504096." evidence="6">
    <original>G</original>
    <variation>E</variation>
    <location>
        <position position="36"/>
    </location>
</feature>
<feature type="sequence variant" id="VAR_049484" description="In dbSNP:rs1052661." evidence="5 6">
    <original>I</original>
    <variation>L</variation>
    <location>
        <position position="71"/>
    </location>
</feature>
<feature type="sequence variant" id="VAR_049485" description="In dbSNP:rs41273858." evidence="6">
    <original>N</original>
    <variation>D</variation>
    <location>
        <position position="73"/>
    </location>
</feature>
<feature type="sequence variant" id="VAR_062277" description="In dbSNP:rs45602042." evidence="6">
    <original>R</original>
    <variation>Q</variation>
    <location>
        <position position="113"/>
    </location>
</feature>
<feature type="sequence variant" id="VAR_062278" description="In dbSNP:rs45620832." evidence="6">
    <original>A</original>
    <variation>T</variation>
    <location>
        <position position="208"/>
    </location>
</feature>
<feature type="sequence conflict" description="In Ref. 6; AAH20619." evidence="7" ref="6">
    <original>M</original>
    <variation>I</variation>
    <location>
        <position position="63"/>
    </location>
</feature>
<feature type="sequence conflict" description="In Ref. 1; AAA74634." evidence="7" ref="1">
    <original>RP</original>
    <variation>PA</variation>
    <location>
        <begin position="113"/>
        <end position="114"/>
    </location>
</feature>
<feature type="sequence conflict" description="In Ref. 1; AAA74634." evidence="7" ref="1">
    <original>T</original>
    <variation>I</variation>
    <location>
        <position position="128"/>
    </location>
</feature>
<feature type="strand" evidence="10">
    <location>
        <begin position="6"/>
        <end position="9"/>
    </location>
</feature>
<feature type="turn" evidence="10">
    <location>
        <begin position="14"/>
        <end position="16"/>
    </location>
</feature>
<feature type="helix" evidence="10">
    <location>
        <begin position="17"/>
        <end position="25"/>
    </location>
</feature>
<feature type="strand" evidence="10">
    <location>
        <begin position="31"/>
        <end position="34"/>
    </location>
</feature>
<feature type="helix" evidence="10">
    <location>
        <begin position="38"/>
        <end position="46"/>
    </location>
</feature>
<feature type="strand" evidence="10">
    <location>
        <begin position="57"/>
        <end position="60"/>
    </location>
</feature>
<feature type="strand" evidence="10">
    <location>
        <begin position="63"/>
        <end position="67"/>
    </location>
</feature>
<feature type="helix" evidence="10">
    <location>
        <begin position="68"/>
        <end position="78"/>
    </location>
</feature>
<feature type="helix" evidence="10">
    <location>
        <begin position="86"/>
        <end position="108"/>
    </location>
</feature>
<feature type="helix" evidence="10">
    <location>
        <begin position="109"/>
        <end position="111"/>
    </location>
</feature>
<feature type="helix" evidence="10">
    <location>
        <begin position="114"/>
        <end position="130"/>
    </location>
</feature>
<feature type="helix" evidence="10">
    <location>
        <begin position="132"/>
        <end position="143"/>
    </location>
</feature>
<feature type="strand" evidence="10">
    <location>
        <begin position="146"/>
        <end position="149"/>
    </location>
</feature>
<feature type="helix" evidence="10">
    <location>
        <begin position="155"/>
        <end position="170"/>
    </location>
</feature>
<feature type="turn" evidence="10">
    <location>
        <begin position="172"/>
        <end position="177"/>
    </location>
</feature>
<feature type="helix" evidence="10">
    <location>
        <begin position="179"/>
        <end position="190"/>
    </location>
</feature>
<feature type="helix" evidence="10">
    <location>
        <begin position="192"/>
        <end position="197"/>
    </location>
</feature>
<feature type="helix" evidence="10">
    <location>
        <begin position="210"/>
        <end position="220"/>
    </location>
</feature>
<comment type="function">
    <text evidence="1 2 3 4">Conjugation of reduced glutathione to a wide number of exogenous and endogenous hydrophobic electrophiles. Catalyzes isomerization reactions that contribute to the biosynthesis of steroid hormones. Efficiently catalyze obligatory double-bond isomerizations of delta(5)-androstene-3,17-dione and delta(5)-pregnene-3,20-dione, precursors to testosterone and progesterone, respectively. Has substantial activity toward aflatoxin B1-8,9-epoxide (By similarity).</text>
</comment>
<comment type="catalytic activity">
    <reaction evidence="8">
        <text>RX + glutathione = an S-substituted glutathione + a halide anion + H(+)</text>
        <dbReference type="Rhea" id="RHEA:16437"/>
        <dbReference type="ChEBI" id="CHEBI:15378"/>
        <dbReference type="ChEBI" id="CHEBI:16042"/>
        <dbReference type="ChEBI" id="CHEBI:17792"/>
        <dbReference type="ChEBI" id="CHEBI:57925"/>
        <dbReference type="ChEBI" id="CHEBI:90779"/>
        <dbReference type="EC" id="2.5.1.18"/>
    </reaction>
    <physiologicalReaction direction="left-to-right" evidence="8">
        <dbReference type="Rhea" id="RHEA:16438"/>
    </physiologicalReaction>
</comment>
<comment type="catalytic activity">
    <reaction evidence="2">
        <text>androst-5-ene-3,17-dione = androst-4-ene-3,17-dione</text>
        <dbReference type="Rhea" id="RHEA:43936"/>
        <dbReference type="ChEBI" id="CHEBI:16422"/>
        <dbReference type="ChEBI" id="CHEBI:83865"/>
    </reaction>
    <physiologicalReaction direction="left-to-right" evidence="8">
        <dbReference type="Rhea" id="RHEA:43937"/>
    </physiologicalReaction>
</comment>
<comment type="catalytic activity">
    <reaction evidence="2">
        <text>pregn-5-ene-3,20-dione = progesterone</text>
        <dbReference type="Rhea" id="RHEA:43928"/>
        <dbReference type="ChEBI" id="CHEBI:17026"/>
        <dbReference type="ChEBI" id="CHEBI:63837"/>
    </reaction>
    <physiologicalReaction direction="left-to-right" evidence="8">
        <dbReference type="Rhea" id="RHEA:43929"/>
    </physiologicalReaction>
</comment>
<comment type="biophysicochemical properties">
    <kinetics>
        <KM evidence="3">23 uM for androst-5-ene-3,17-dione</KM>
        <KM evidence="2">24 uM for androst-5-ene-3,17-dione (at pH 8.0 and 30 degrees Celsius)</KM>
        <KM evidence="2">24 uM for androst-5-ene-3,17-dione (at pH 7.4 and 37 degrees Celsius)</KM>
        <KM evidence="2">17 uM for pregn-5-ene-3,20-dione (at pH 8.0 and 30 degrees Celsius)</KM>
        <KM evidence="2">17 uM for pregn-5-ene-3,20-dione (at pH 7.4 and 37 degrees Celsius)</KM>
        <Vmax evidence="3">99.0 umol/min/mg enzyme for delta(5)-androstene-3,17-dione isomerization</Vmax>
        <text evidence="2">kcats are 102 sec(-1) and 27 sec(-1) for androst-5-ene-3,17-dione and pregn-5-ene-3,20-dione as substrates, respectively (at pH 8.0 and 30 degrees Celsius).</text>
    </kinetics>
</comment>
<comment type="subunit">
    <text evidence="3 4">Homodimer.</text>
</comment>
<comment type="subcellular location">
    <subcellularLocation>
        <location>Cytoplasm</location>
    </subcellularLocation>
</comment>
<comment type="similarity">
    <text evidence="7">Belongs to the GST superfamily. Alpha family.</text>
</comment>
<comment type="sequence caution" evidence="7">
    <conflict type="erroneous initiation">
        <sequence resource="EMBL-CDS" id="AAA74634"/>
    </conflict>
    <text>Extended N-terminus.</text>
</comment>
<comment type="sequence caution" evidence="7">
    <conflict type="erroneous initiation">
        <sequence resource="EMBL-CDS" id="AAD04712"/>
    </conflict>
    <text>Extended N-terminus.</text>
</comment>
<sequence>MAGKPKLHYFNGRGRMEPIRWLLAAAGVEFEEKFIGSAEDLGKLRNDGSLMFQQVPMVEIDGMKLVQTRAILNYIASKYNLYGKDIKERALIDMYTEGMADLNEMILLLPLCRPEEKDAKIALIKEKTKSRYFPAFEKVLQSHGQDYLVGNKLSRADISLVELLYYVEELDSSLISNFPLLKALKTRISNLPTVKKFLQPGSPRKPPADAKALEEARKIFRF</sequence>
<gene>
    <name evidence="9" type="primary">GSTA3</name>
</gene>
<dbReference type="EC" id="2.5.1.18"/>
<dbReference type="EMBL" id="L13275">
    <property type="protein sequence ID" value="AAA74634.1"/>
    <property type="status" value="ALT_INIT"/>
    <property type="molecule type" value="Genomic_DNA"/>
</dbReference>
<dbReference type="EMBL" id="L13270">
    <property type="protein sequence ID" value="AAA74634.1"/>
    <property type="status" value="JOINED"/>
    <property type="molecule type" value="Genomic_DNA"/>
</dbReference>
<dbReference type="EMBL" id="L13271">
    <property type="protein sequence ID" value="AAA74634.1"/>
    <property type="status" value="JOINED"/>
    <property type="molecule type" value="Genomic_DNA"/>
</dbReference>
<dbReference type="EMBL" id="L13272">
    <property type="protein sequence ID" value="AAA74634.1"/>
    <property type="status" value="JOINED"/>
    <property type="molecule type" value="Genomic_DNA"/>
</dbReference>
<dbReference type="EMBL" id="L13273">
    <property type="protein sequence ID" value="AAA74634.1"/>
    <property type="status" value="JOINED"/>
    <property type="molecule type" value="Genomic_DNA"/>
</dbReference>
<dbReference type="EMBL" id="L13274">
    <property type="protein sequence ID" value="AAA74634.1"/>
    <property type="status" value="JOINED"/>
    <property type="molecule type" value="Genomic_DNA"/>
</dbReference>
<dbReference type="EMBL" id="AF508266">
    <property type="protein sequence ID" value="AAM33360.1"/>
    <property type="molecule type" value="mRNA"/>
</dbReference>
<dbReference type="EMBL" id="DQ993361">
    <property type="protein sequence ID" value="ABI75350.1"/>
    <property type="molecule type" value="Genomic_DNA"/>
</dbReference>
<dbReference type="EMBL" id="AL121969">
    <property type="status" value="NOT_ANNOTATED_CDS"/>
    <property type="molecule type" value="Genomic_DNA"/>
</dbReference>
<dbReference type="EMBL" id="CH471081">
    <property type="protein sequence ID" value="EAX04391.1"/>
    <property type="molecule type" value="Genomic_DNA"/>
</dbReference>
<dbReference type="EMBL" id="BC020619">
    <property type="protein sequence ID" value="AAH20619.1"/>
    <property type="molecule type" value="mRNA"/>
</dbReference>
<dbReference type="EMBL" id="AF020919">
    <property type="protein sequence ID" value="AAD04712.1"/>
    <property type="status" value="ALT_INIT"/>
    <property type="molecule type" value="mRNA"/>
</dbReference>
<dbReference type="CCDS" id="CCDS4947.1"/>
<dbReference type="PIR" id="A49365">
    <property type="entry name" value="A49365"/>
</dbReference>
<dbReference type="RefSeq" id="NP_000838.3">
    <property type="nucleotide sequence ID" value="NM_000847.4"/>
</dbReference>
<dbReference type="PDB" id="1TDI">
    <property type="method" value="X-ray"/>
    <property type="resolution" value="2.40 A"/>
    <property type="chains" value="A/B=1-222"/>
</dbReference>
<dbReference type="PDB" id="2VCV">
    <property type="method" value="X-ray"/>
    <property type="resolution" value="1.80 A"/>
    <property type="chains" value="A/B/C/D/E/F/G/H/I/J/K/L/M/N/O/P=1-222"/>
</dbReference>
<dbReference type="PDBsum" id="1TDI"/>
<dbReference type="PDBsum" id="2VCV"/>
<dbReference type="SMR" id="Q16772"/>
<dbReference type="BioGRID" id="109195">
    <property type="interactions" value="4"/>
</dbReference>
<dbReference type="FunCoup" id="Q16772">
    <property type="interactions" value="168"/>
</dbReference>
<dbReference type="IntAct" id="Q16772">
    <property type="interactions" value="3"/>
</dbReference>
<dbReference type="STRING" id="9606.ENSP00000211122"/>
<dbReference type="ChEMBL" id="CHEMBL4866"/>
<dbReference type="DrugBank" id="DB04521">
    <property type="generic name" value="4-S-Glutathionyl-5-pentyl-tetrahydro-furan-2-ol"/>
</dbReference>
<dbReference type="DrugBank" id="DB00143">
    <property type="generic name" value="Glutathione"/>
</dbReference>
<dbReference type="DrugBank" id="DB14924">
    <property type="generic name" value="Ritlecitinib"/>
</dbReference>
<dbReference type="SwissLipids" id="SLP:000001612"/>
<dbReference type="iPTMnet" id="Q16772"/>
<dbReference type="PhosphoSitePlus" id="Q16772"/>
<dbReference type="BioMuta" id="GSTA3"/>
<dbReference type="DMDM" id="21264437"/>
<dbReference type="jPOST" id="Q16772"/>
<dbReference type="MassIVE" id="Q16772"/>
<dbReference type="PaxDb" id="9606-ENSP00000211122"/>
<dbReference type="PeptideAtlas" id="Q16772"/>
<dbReference type="ProteomicsDB" id="61058"/>
<dbReference type="Antibodypedia" id="30950">
    <property type="antibodies" value="312 antibodies from 29 providers"/>
</dbReference>
<dbReference type="DNASU" id="2940"/>
<dbReference type="Ensembl" id="ENST00000211122.4">
    <property type="protein sequence ID" value="ENSP00000211122.3"/>
    <property type="gene ID" value="ENSG00000174156.15"/>
</dbReference>
<dbReference type="GeneID" id="2940"/>
<dbReference type="KEGG" id="hsa:2940"/>
<dbReference type="MANE-Select" id="ENST00000211122.4">
    <property type="protein sequence ID" value="ENSP00000211122.3"/>
    <property type="RefSeq nucleotide sequence ID" value="NM_000847.5"/>
    <property type="RefSeq protein sequence ID" value="NP_000838.3"/>
</dbReference>
<dbReference type="UCSC" id="uc003pbb.4">
    <property type="organism name" value="human"/>
</dbReference>
<dbReference type="AGR" id="HGNC:4628"/>
<dbReference type="CTD" id="2940"/>
<dbReference type="DisGeNET" id="2940"/>
<dbReference type="GeneCards" id="GSTA3"/>
<dbReference type="HGNC" id="HGNC:4628">
    <property type="gene designation" value="GSTA3"/>
</dbReference>
<dbReference type="HPA" id="ENSG00000174156">
    <property type="expression patterns" value="Group enriched (adrenal gland, fallopian tube, placenta, skin)"/>
</dbReference>
<dbReference type="MIM" id="605449">
    <property type="type" value="gene"/>
</dbReference>
<dbReference type="neXtProt" id="NX_Q16772"/>
<dbReference type="OpenTargets" id="ENSG00000174156"/>
<dbReference type="PharmGKB" id="PA29018"/>
<dbReference type="VEuPathDB" id="HostDB:ENSG00000174156"/>
<dbReference type="eggNOG" id="KOG1695">
    <property type="taxonomic scope" value="Eukaryota"/>
</dbReference>
<dbReference type="GeneTree" id="ENSGT00940000164319"/>
<dbReference type="HOGENOM" id="CLU_039475_4_0_1"/>
<dbReference type="InParanoid" id="Q16772"/>
<dbReference type="OMA" id="ARYPAKW"/>
<dbReference type="OrthoDB" id="414243at2759"/>
<dbReference type="PAN-GO" id="Q16772">
    <property type="GO annotations" value="4 GO annotations based on evolutionary models"/>
</dbReference>
<dbReference type="PhylomeDB" id="Q16772"/>
<dbReference type="TreeFam" id="TF105321"/>
<dbReference type="BRENDA" id="2.5.1.18">
    <property type="organism ID" value="2681"/>
</dbReference>
<dbReference type="BRENDA" id="5.3.3.1">
    <property type="organism ID" value="2681"/>
</dbReference>
<dbReference type="PathwayCommons" id="Q16772"/>
<dbReference type="Reactome" id="R-HSA-156590">
    <property type="pathway name" value="Glutathione conjugation"/>
</dbReference>
<dbReference type="Reactome" id="R-HSA-9818027">
    <property type="pathway name" value="NFE2L2 regulating anti-oxidant/detoxification enzymes"/>
</dbReference>
<dbReference type="SABIO-RK" id="Q16772"/>
<dbReference type="SignaLink" id="Q16772"/>
<dbReference type="BioGRID-ORCS" id="2940">
    <property type="hits" value="10 hits in 1084 CRISPR screens"/>
</dbReference>
<dbReference type="CD-CODE" id="91857CE7">
    <property type="entry name" value="Nucleolus"/>
</dbReference>
<dbReference type="EvolutionaryTrace" id="Q16772"/>
<dbReference type="GeneWiki" id="GSTA3"/>
<dbReference type="GenomeRNAi" id="2940"/>
<dbReference type="Pharos" id="Q16772">
    <property type="development level" value="Tbio"/>
</dbReference>
<dbReference type="PRO" id="PR:Q16772"/>
<dbReference type="Proteomes" id="UP000005640">
    <property type="component" value="Chromosome 6"/>
</dbReference>
<dbReference type="RNAct" id="Q16772">
    <property type="molecule type" value="protein"/>
</dbReference>
<dbReference type="Bgee" id="ENSG00000174156">
    <property type="expression patterns" value="Expressed in right uterine tube and 103 other cell types or tissues"/>
</dbReference>
<dbReference type="ExpressionAtlas" id="Q16772">
    <property type="expression patterns" value="baseline and differential"/>
</dbReference>
<dbReference type="GO" id="GO:0005829">
    <property type="term" value="C:cytosol"/>
    <property type="evidence" value="ECO:0000314"/>
    <property type="project" value="HPA"/>
</dbReference>
<dbReference type="GO" id="GO:0070062">
    <property type="term" value="C:extracellular exosome"/>
    <property type="evidence" value="ECO:0007005"/>
    <property type="project" value="UniProtKB"/>
</dbReference>
<dbReference type="GO" id="GO:0004364">
    <property type="term" value="F:glutathione transferase activity"/>
    <property type="evidence" value="ECO:0000250"/>
    <property type="project" value="UniProtKB"/>
</dbReference>
<dbReference type="GO" id="GO:0006749">
    <property type="term" value="P:glutathione metabolic process"/>
    <property type="evidence" value="ECO:0000250"/>
    <property type="project" value="UniProtKB"/>
</dbReference>
<dbReference type="GO" id="GO:0006629">
    <property type="term" value="P:lipid metabolic process"/>
    <property type="evidence" value="ECO:0007669"/>
    <property type="project" value="UniProtKB-KW"/>
</dbReference>
<dbReference type="GO" id="GO:0006805">
    <property type="term" value="P:xenobiotic metabolic process"/>
    <property type="evidence" value="ECO:0000318"/>
    <property type="project" value="GO_Central"/>
</dbReference>
<dbReference type="CDD" id="cd03208">
    <property type="entry name" value="GST_C_Alpha"/>
    <property type="match status" value="1"/>
</dbReference>
<dbReference type="CDD" id="cd03077">
    <property type="entry name" value="GST_N_Alpha"/>
    <property type="match status" value="1"/>
</dbReference>
<dbReference type="FunFam" id="1.20.1050.10:FF:000005">
    <property type="entry name" value="Glutathione S-transferase A1"/>
    <property type="match status" value="1"/>
</dbReference>
<dbReference type="Gene3D" id="1.20.1050.10">
    <property type="match status" value="1"/>
</dbReference>
<dbReference type="Gene3D" id="3.40.30.10">
    <property type="entry name" value="Glutaredoxin"/>
    <property type="match status" value="1"/>
</dbReference>
<dbReference type="InterPro" id="IPR010987">
    <property type="entry name" value="Glutathione-S-Trfase_C-like"/>
</dbReference>
<dbReference type="InterPro" id="IPR036282">
    <property type="entry name" value="Glutathione-S-Trfase_C_sf"/>
</dbReference>
<dbReference type="InterPro" id="IPR040079">
    <property type="entry name" value="Glutathione_S-Trfase"/>
</dbReference>
<dbReference type="InterPro" id="IPR004045">
    <property type="entry name" value="Glutathione_S-Trfase_N"/>
</dbReference>
<dbReference type="InterPro" id="IPR003080">
    <property type="entry name" value="GST_alpha"/>
</dbReference>
<dbReference type="InterPro" id="IPR004046">
    <property type="entry name" value="GST_C"/>
</dbReference>
<dbReference type="InterPro" id="IPR050213">
    <property type="entry name" value="GST_superfamily"/>
</dbReference>
<dbReference type="InterPro" id="IPR036249">
    <property type="entry name" value="Thioredoxin-like_sf"/>
</dbReference>
<dbReference type="PANTHER" id="PTHR11571">
    <property type="entry name" value="GLUTATHIONE S-TRANSFERASE"/>
    <property type="match status" value="1"/>
</dbReference>
<dbReference type="PANTHER" id="PTHR11571:SF257">
    <property type="entry name" value="GLUTATHIONE S-TRANSFERASE A3"/>
    <property type="match status" value="1"/>
</dbReference>
<dbReference type="Pfam" id="PF00043">
    <property type="entry name" value="GST_C"/>
    <property type="match status" value="1"/>
</dbReference>
<dbReference type="Pfam" id="PF02798">
    <property type="entry name" value="GST_N"/>
    <property type="match status" value="1"/>
</dbReference>
<dbReference type="PRINTS" id="PR01266">
    <property type="entry name" value="GSTRNSFRASEA"/>
</dbReference>
<dbReference type="SFLD" id="SFLDG01205">
    <property type="entry name" value="AMPS.1"/>
    <property type="match status" value="1"/>
</dbReference>
<dbReference type="SFLD" id="SFLDS00019">
    <property type="entry name" value="Glutathione_Transferase_(cytos"/>
    <property type="match status" value="1"/>
</dbReference>
<dbReference type="SUPFAM" id="SSF47616">
    <property type="entry name" value="GST C-terminal domain-like"/>
    <property type="match status" value="1"/>
</dbReference>
<dbReference type="SUPFAM" id="SSF52833">
    <property type="entry name" value="Thioredoxin-like"/>
    <property type="match status" value="1"/>
</dbReference>
<dbReference type="PROSITE" id="PS50405">
    <property type="entry name" value="GST_CTER"/>
    <property type="match status" value="1"/>
</dbReference>
<dbReference type="PROSITE" id="PS50404">
    <property type="entry name" value="GST_NTER"/>
    <property type="match status" value="1"/>
</dbReference>
<reference key="1">
    <citation type="journal article" date="1993" name="Genomics">
        <title>Structure and organization of the human alpha class glutathione S-transferase genes and related pseudogenes.</title>
        <authorList>
            <person name="Suzuki T."/>
            <person name="Johnston P.N."/>
            <person name="Board P.G."/>
        </authorList>
    </citation>
    <scope>NUCLEOTIDE SEQUENCE [GENOMIC DNA]</scope>
</reference>
<reference key="2">
    <citation type="journal article" date="2001" name="J. Biol. Chem.">
        <title>Human glutathione transferase A3-3, a highly efficient catalyst of double-bond isomerization in the biosynthetic pathway of steroid hormones.</title>
        <authorList>
            <person name="Johansson A.-S."/>
            <person name="Mannervik B."/>
        </authorList>
    </citation>
    <scope>NUCLEOTIDE SEQUENCE [MRNA]</scope>
    <scope>CHARACTERIZATION</scope>
    <scope>CATALYTIC ACTIVITY</scope>
    <scope>FUNCTION</scope>
    <scope>BIOPHYSICOCHEMICAL PROPERTIES</scope>
</reference>
<reference key="3">
    <citation type="submission" date="2006-09" db="EMBL/GenBank/DDBJ databases">
        <authorList>
            <consortium name="NIEHS SNPs program"/>
        </authorList>
    </citation>
    <scope>NUCLEOTIDE SEQUENCE [GENOMIC DNA]</scope>
    <scope>VARIANTS GLU-36; LEU-71; ASP-73; GLN-113 AND THR-208</scope>
</reference>
<reference key="4">
    <citation type="journal article" date="2003" name="Nature">
        <title>The DNA sequence and analysis of human chromosome 6.</title>
        <authorList>
            <person name="Mungall A.J."/>
            <person name="Palmer S.A."/>
            <person name="Sims S.K."/>
            <person name="Edwards C.A."/>
            <person name="Ashurst J.L."/>
            <person name="Wilming L."/>
            <person name="Jones M.C."/>
            <person name="Horton R."/>
            <person name="Hunt S.E."/>
            <person name="Scott C.E."/>
            <person name="Gilbert J.G.R."/>
            <person name="Clamp M.E."/>
            <person name="Bethel G."/>
            <person name="Milne S."/>
            <person name="Ainscough R."/>
            <person name="Almeida J.P."/>
            <person name="Ambrose K.D."/>
            <person name="Andrews T.D."/>
            <person name="Ashwell R.I.S."/>
            <person name="Babbage A.K."/>
            <person name="Bagguley C.L."/>
            <person name="Bailey J."/>
            <person name="Banerjee R."/>
            <person name="Barker D.J."/>
            <person name="Barlow K.F."/>
            <person name="Bates K."/>
            <person name="Beare D.M."/>
            <person name="Beasley H."/>
            <person name="Beasley O."/>
            <person name="Bird C.P."/>
            <person name="Blakey S.E."/>
            <person name="Bray-Allen S."/>
            <person name="Brook J."/>
            <person name="Brown A.J."/>
            <person name="Brown J.Y."/>
            <person name="Burford D.C."/>
            <person name="Burrill W."/>
            <person name="Burton J."/>
            <person name="Carder C."/>
            <person name="Carter N.P."/>
            <person name="Chapman J.C."/>
            <person name="Clark S.Y."/>
            <person name="Clark G."/>
            <person name="Clee C.M."/>
            <person name="Clegg S."/>
            <person name="Cobley V."/>
            <person name="Collier R.E."/>
            <person name="Collins J.E."/>
            <person name="Colman L.K."/>
            <person name="Corby N.R."/>
            <person name="Coville G.J."/>
            <person name="Culley K.M."/>
            <person name="Dhami P."/>
            <person name="Davies J."/>
            <person name="Dunn M."/>
            <person name="Earthrowl M.E."/>
            <person name="Ellington A.E."/>
            <person name="Evans K.A."/>
            <person name="Faulkner L."/>
            <person name="Francis M.D."/>
            <person name="Frankish A."/>
            <person name="Frankland J."/>
            <person name="French L."/>
            <person name="Garner P."/>
            <person name="Garnett J."/>
            <person name="Ghori M.J."/>
            <person name="Gilby L.M."/>
            <person name="Gillson C.J."/>
            <person name="Glithero R.J."/>
            <person name="Grafham D.V."/>
            <person name="Grant M."/>
            <person name="Gribble S."/>
            <person name="Griffiths C."/>
            <person name="Griffiths M.N.D."/>
            <person name="Hall R."/>
            <person name="Halls K.S."/>
            <person name="Hammond S."/>
            <person name="Harley J.L."/>
            <person name="Hart E.A."/>
            <person name="Heath P.D."/>
            <person name="Heathcott R."/>
            <person name="Holmes S.J."/>
            <person name="Howden P.J."/>
            <person name="Howe K.L."/>
            <person name="Howell G.R."/>
            <person name="Huckle E."/>
            <person name="Humphray S.J."/>
            <person name="Humphries M.D."/>
            <person name="Hunt A.R."/>
            <person name="Johnson C.M."/>
            <person name="Joy A.A."/>
            <person name="Kay M."/>
            <person name="Keenan S.J."/>
            <person name="Kimberley A.M."/>
            <person name="King A."/>
            <person name="Laird G.K."/>
            <person name="Langford C."/>
            <person name="Lawlor S."/>
            <person name="Leongamornlert D.A."/>
            <person name="Leversha M."/>
            <person name="Lloyd C.R."/>
            <person name="Lloyd D.M."/>
            <person name="Loveland J.E."/>
            <person name="Lovell J."/>
            <person name="Martin S."/>
            <person name="Mashreghi-Mohammadi M."/>
            <person name="Maslen G.L."/>
            <person name="Matthews L."/>
            <person name="McCann O.T."/>
            <person name="McLaren S.J."/>
            <person name="McLay K."/>
            <person name="McMurray A."/>
            <person name="Moore M.J.F."/>
            <person name="Mullikin J.C."/>
            <person name="Niblett D."/>
            <person name="Nickerson T."/>
            <person name="Novik K.L."/>
            <person name="Oliver K."/>
            <person name="Overton-Larty E.K."/>
            <person name="Parker A."/>
            <person name="Patel R."/>
            <person name="Pearce A.V."/>
            <person name="Peck A.I."/>
            <person name="Phillimore B.J.C.T."/>
            <person name="Phillips S."/>
            <person name="Plumb R.W."/>
            <person name="Porter K.M."/>
            <person name="Ramsey Y."/>
            <person name="Ranby S.A."/>
            <person name="Rice C.M."/>
            <person name="Ross M.T."/>
            <person name="Searle S.M."/>
            <person name="Sehra H.K."/>
            <person name="Sheridan E."/>
            <person name="Skuce C.D."/>
            <person name="Smith S."/>
            <person name="Smith M."/>
            <person name="Spraggon L."/>
            <person name="Squares S.L."/>
            <person name="Steward C.A."/>
            <person name="Sycamore N."/>
            <person name="Tamlyn-Hall G."/>
            <person name="Tester J."/>
            <person name="Theaker A.J."/>
            <person name="Thomas D.W."/>
            <person name="Thorpe A."/>
            <person name="Tracey A."/>
            <person name="Tromans A."/>
            <person name="Tubby B."/>
            <person name="Wall M."/>
            <person name="Wallis J.M."/>
            <person name="West A.P."/>
            <person name="White S.S."/>
            <person name="Whitehead S.L."/>
            <person name="Whittaker H."/>
            <person name="Wild A."/>
            <person name="Willey D.J."/>
            <person name="Wilmer T.E."/>
            <person name="Wood J.M."/>
            <person name="Wray P.W."/>
            <person name="Wyatt J.C."/>
            <person name="Young L."/>
            <person name="Younger R.M."/>
            <person name="Bentley D.R."/>
            <person name="Coulson A."/>
            <person name="Durbin R.M."/>
            <person name="Hubbard T."/>
            <person name="Sulston J.E."/>
            <person name="Dunham I."/>
            <person name="Rogers J."/>
            <person name="Beck S."/>
        </authorList>
    </citation>
    <scope>NUCLEOTIDE SEQUENCE [LARGE SCALE GENOMIC DNA]</scope>
</reference>
<reference key="5">
    <citation type="submission" date="2005-07" db="EMBL/GenBank/DDBJ databases">
        <authorList>
            <person name="Mural R.J."/>
            <person name="Istrail S."/>
            <person name="Sutton G.G."/>
            <person name="Florea L."/>
            <person name="Halpern A.L."/>
            <person name="Mobarry C.M."/>
            <person name="Lippert R."/>
            <person name="Walenz B."/>
            <person name="Shatkay H."/>
            <person name="Dew I."/>
            <person name="Miller J.R."/>
            <person name="Flanigan M.J."/>
            <person name="Edwards N.J."/>
            <person name="Bolanos R."/>
            <person name="Fasulo D."/>
            <person name="Halldorsson B.V."/>
            <person name="Hannenhalli S."/>
            <person name="Turner R."/>
            <person name="Yooseph S."/>
            <person name="Lu F."/>
            <person name="Nusskern D.R."/>
            <person name="Shue B.C."/>
            <person name="Zheng X.H."/>
            <person name="Zhong F."/>
            <person name="Delcher A.L."/>
            <person name="Huson D.H."/>
            <person name="Kravitz S.A."/>
            <person name="Mouchard L."/>
            <person name="Reinert K."/>
            <person name="Remington K.A."/>
            <person name="Clark A.G."/>
            <person name="Waterman M.S."/>
            <person name="Eichler E.E."/>
            <person name="Adams M.D."/>
            <person name="Hunkapiller M.W."/>
            <person name="Myers E.W."/>
            <person name="Venter J.C."/>
        </authorList>
    </citation>
    <scope>NUCLEOTIDE SEQUENCE [LARGE SCALE GENOMIC DNA]</scope>
</reference>
<reference key="6">
    <citation type="journal article" date="2004" name="Genome Res.">
        <title>The status, quality, and expansion of the NIH full-length cDNA project: the Mammalian Gene Collection (MGC).</title>
        <authorList>
            <consortium name="The MGC Project Team"/>
        </authorList>
    </citation>
    <scope>NUCLEOTIDE SEQUENCE [LARGE SCALE MRNA]</scope>
    <source>
        <tissue>Placenta</tissue>
    </source>
</reference>
<reference key="7">
    <citation type="journal article" date="1998" name="Biochem. J.">
        <title>Identification of cDNAs encoding two human alpha class glutathione transferases (GSTA3 and GSTA4) and the heterologous expression of GSTA4-4.</title>
        <authorList>
            <person name="Board P.G."/>
        </authorList>
    </citation>
    <scope>NUCLEOTIDE SEQUENCE [MRNA] OF 30-222</scope>
    <scope>VARIANT LEU-71</scope>
</reference>
<reference key="8">
    <citation type="journal article" date="2004" name="Biochemistry">
        <title>Crystal structure of human glutathione S-transferase A3-3 and mechanistic implications for its high steroid isomerase activity.</title>
        <authorList>
            <person name="Gu Y."/>
            <person name="Guo J."/>
            <person name="Pal A."/>
            <person name="Pan S.S."/>
            <person name="Zimniak P."/>
            <person name="Singh S.V."/>
            <person name="Ji X."/>
        </authorList>
    </citation>
    <scope>X-RAY CRYSTALLOGRAPHY (2.4 ANGSTROMS) IN COMPLEX WITH GLUTATHIONE</scope>
    <scope>BIOPHYSICOCHEMICAL PROPERTIES</scope>
    <scope>FUNCTION</scope>
</reference>
<reference key="9">
    <citation type="journal article" date="2010" name="J. Mol. Biol.">
        <title>Structural basis for featuring of steroid isomerase activity in alpha class glutathione transferases.</title>
        <authorList>
            <person name="Tars K."/>
            <person name="Olin B."/>
            <person name="Mannervik B."/>
        </authorList>
    </citation>
    <scope>X-RAY CRYSTALLOGRAPHY (1.8 ANGSTROMS) IN COMPLEX WITH GLUTATHIONE AND DELTA5-ANDROSTENE-3-17-DIONE</scope>
    <scope>FUNCTION</scope>
    <scope>SUBUNIT</scope>
</reference>
<name>GSTA3_HUMAN</name>
<protein>
    <recommendedName>
        <fullName evidence="7">Glutathione S-transferase A3</fullName>
        <ecNumber>2.5.1.18</ecNumber>
    </recommendedName>
    <alternativeName>
        <fullName>GST class-alpha member 3</fullName>
    </alternativeName>
    <alternativeName>
        <fullName>Glutathione S-transferase A3-3</fullName>
    </alternativeName>
</protein>
<accession>Q16772</accession>
<accession>O43468</accession>
<accession>Q068V6</accession>
<accession>Q8WWA8</accession>
<accession>Q9H415</accession>
<keyword id="KW-0002">3D-structure</keyword>
<keyword id="KW-0007">Acetylation</keyword>
<keyword id="KW-0963">Cytoplasm</keyword>
<keyword id="KW-0443">Lipid metabolism</keyword>
<keyword id="KW-1267">Proteomics identification</keyword>
<keyword id="KW-1185">Reference proteome</keyword>
<keyword id="KW-0808">Transferase</keyword>